<proteinExistence type="inferred from homology"/>
<dbReference type="EMBL" id="AAVQ01000001">
    <property type="protein sequence ID" value="EAZ63337.2"/>
    <property type="molecule type" value="Genomic_DNA"/>
</dbReference>
<dbReference type="RefSeq" id="XP_001387360.2">
    <property type="nucleotide sequence ID" value="XM_001387323.1"/>
</dbReference>
<dbReference type="SMR" id="A3GFF4"/>
<dbReference type="FunCoup" id="A3GFF4">
    <property type="interactions" value="149"/>
</dbReference>
<dbReference type="STRING" id="322104.A3GFF4"/>
<dbReference type="GeneID" id="4851003"/>
<dbReference type="KEGG" id="pic:PICST_28227"/>
<dbReference type="eggNOG" id="ENOG502SCMV">
    <property type="taxonomic scope" value="Eukaryota"/>
</dbReference>
<dbReference type="HOGENOM" id="CLU_126121_0_0_1"/>
<dbReference type="InParanoid" id="A3GFF4"/>
<dbReference type="OMA" id="FENKWEN"/>
<dbReference type="OrthoDB" id="18595at2759"/>
<dbReference type="Proteomes" id="UP000002258">
    <property type="component" value="Chromosome 1"/>
</dbReference>
<dbReference type="GO" id="GO:0005739">
    <property type="term" value="C:mitochondrion"/>
    <property type="evidence" value="ECO:0007669"/>
    <property type="project" value="UniProtKB-SubCell"/>
</dbReference>
<dbReference type="GO" id="GO:1990904">
    <property type="term" value="C:ribonucleoprotein complex"/>
    <property type="evidence" value="ECO:0007669"/>
    <property type="project" value="UniProtKB-KW"/>
</dbReference>
<dbReference type="GO" id="GO:0005840">
    <property type="term" value="C:ribosome"/>
    <property type="evidence" value="ECO:0007669"/>
    <property type="project" value="UniProtKB-KW"/>
</dbReference>
<dbReference type="InterPro" id="IPR039603">
    <property type="entry name" value="Ribosomal_mS41"/>
</dbReference>
<dbReference type="InterPro" id="IPR019083">
    <property type="entry name" value="SAM_Ribosomal_mS41"/>
</dbReference>
<dbReference type="PANTHER" id="PTHR28235">
    <property type="entry name" value="PROTEIN FYV4, MITOCHONDRIAL"/>
    <property type="match status" value="1"/>
</dbReference>
<dbReference type="PANTHER" id="PTHR28235:SF1">
    <property type="entry name" value="SMALL RIBOSOMAL SUBUNIT PROTEIN MS41"/>
    <property type="match status" value="1"/>
</dbReference>
<dbReference type="Pfam" id="PF09597">
    <property type="entry name" value="SAM_Ribosomal_mS41"/>
    <property type="match status" value="1"/>
</dbReference>
<dbReference type="SMART" id="SM01238">
    <property type="entry name" value="IGR"/>
    <property type="match status" value="1"/>
</dbReference>
<name>FYV4_PICST</name>
<evidence type="ECO:0000250" key="1"/>
<evidence type="ECO:0000255" key="2"/>
<evidence type="ECO:0000256" key="3">
    <source>
        <dbReference type="SAM" id="MobiDB-lite"/>
    </source>
</evidence>
<evidence type="ECO:0000305" key="4"/>
<comment type="function">
    <text evidence="1">Involved in telomere length regulation.</text>
</comment>
<comment type="subcellular location">
    <subcellularLocation>
        <location evidence="1">Mitochondrion</location>
    </subcellularLocation>
</comment>
<comment type="similarity">
    <text evidence="4">Belongs to the mitochondrion-specific ribosomal protein mS41 family.</text>
</comment>
<reference key="1">
    <citation type="journal article" date="2007" name="Nat. Biotechnol.">
        <title>Genome sequence of the lignocellulose-bioconverting and xylose-fermenting yeast Pichia stipitis.</title>
        <authorList>
            <person name="Jeffries T.W."/>
            <person name="Grigoriev I.V."/>
            <person name="Grimwood J."/>
            <person name="Laplaza J.M."/>
            <person name="Aerts A."/>
            <person name="Salamov A."/>
            <person name="Schmutz J."/>
            <person name="Lindquist E."/>
            <person name="Dehal P."/>
            <person name="Shapiro H."/>
            <person name="Jin Y.-S."/>
            <person name="Passoth V."/>
            <person name="Richardson P.M."/>
        </authorList>
    </citation>
    <scope>NUCLEOTIDE SEQUENCE [LARGE SCALE GENOMIC DNA]</scope>
    <source>
        <strain>ATCC 58785 / CBS 6054 / NBRC 10063 / NRRL Y-11545</strain>
    </source>
</reference>
<feature type="transit peptide" description="Mitochondrion" evidence="2">
    <location>
        <begin position="1"/>
        <end position="23"/>
    </location>
</feature>
<feature type="chain" id="PRO_0000292473" description="Small ribosomal subunit protein mS41">
    <location>
        <begin position="24"/>
        <end position="171"/>
    </location>
</feature>
<feature type="region of interest" description="Disordered" evidence="3">
    <location>
        <begin position="122"/>
        <end position="141"/>
    </location>
</feature>
<protein>
    <recommendedName>
        <fullName evidence="4">Small ribosomal subunit protein mS41</fullName>
    </recommendedName>
    <alternativeName>
        <fullName>Protein FYV4, mitochondrial</fullName>
    </alternativeName>
</protein>
<sequence length="171" mass="19519">MSLFKSLVARSGSGIRAAQIARQNGPVISQISIISSQPFSTSPVSYKTNTSTRTKENVHDLETFFRLIGRNTVEHLDLFEGDLAKFLSTSSQQMKFMGIDVSTRRYMLRWKHKFENDLEPLREHKKGKKKNGGERNAKTVLAKKNALKKLEEKEKFAAEELDAENRGERLF</sequence>
<accession>A3GFF4</accession>
<organism>
    <name type="scientific">Scheffersomyces stipitis (strain ATCC 58785 / CBS 6054 / NBRC 10063 / NRRL Y-11545)</name>
    <name type="common">Yeast</name>
    <name type="synonym">Pichia stipitis</name>
    <dbReference type="NCBI Taxonomy" id="322104"/>
    <lineage>
        <taxon>Eukaryota</taxon>
        <taxon>Fungi</taxon>
        <taxon>Dikarya</taxon>
        <taxon>Ascomycota</taxon>
        <taxon>Saccharomycotina</taxon>
        <taxon>Pichiomycetes</taxon>
        <taxon>Debaryomycetaceae</taxon>
        <taxon>Scheffersomyces</taxon>
    </lineage>
</organism>
<gene>
    <name type="primary">FYV4</name>
    <name type="ORF">PICST_28227</name>
</gene>
<keyword id="KW-0496">Mitochondrion</keyword>
<keyword id="KW-1185">Reference proteome</keyword>
<keyword id="KW-0687">Ribonucleoprotein</keyword>
<keyword id="KW-0689">Ribosomal protein</keyword>
<keyword id="KW-0809">Transit peptide</keyword>